<name>ST1E1_RAT</name>
<reference key="1">
    <citation type="journal article" date="1992" name="Mol. Endocrinol.">
        <title>Estrogen sulfotransferase of the rat liver: complementary DNA cloning and age- and sex-specific regulation of messenger RNA.</title>
        <authorList>
            <person name="Demyan W.F."/>
            <person name="Song C.S."/>
            <person name="Kim D.S."/>
            <person name="Her S."/>
            <person name="Gallwitz W."/>
            <person name="Rao T.R."/>
            <person name="Slomczynska M."/>
            <person name="Chatterjee B."/>
            <person name="Roy A.K."/>
        </authorList>
    </citation>
    <scope>NUCLEOTIDE SEQUENCE [MRNA]</scope>
    <scope>PROTEIN SEQUENCE OF 258-265</scope>
    <source>
        <tissue>Liver</tissue>
    </source>
</reference>
<reference key="2">
    <citation type="journal article" date="1995" name="J. Steroid Biochem. Mol. Biol.">
        <title>Isolation and expression of an isoform of rat estrogen sulfotransferase.</title>
        <authorList>
            <person name="Falany J.L."/>
            <person name="Krasnykh V."/>
            <person name="Mikheeva G."/>
            <person name="Falany C.N."/>
        </authorList>
    </citation>
    <scope>NUCLEOTIDE SEQUENCE [MRNA]</scope>
    <scope>FUNCTION</scope>
    <scope>CATALYTIC ACTIVITY</scope>
    <scope>TISSUE SPECIFICITY</scope>
    <source>
        <tissue>Liver</tissue>
    </source>
</reference>
<reference key="3">
    <citation type="journal article" date="1996" name="Biochim. Biophys. Acta">
        <title>Structural relationships among members of the mammalian sulfotransferase gene family.</title>
        <authorList>
            <person name="Rikke B.A."/>
            <person name="Roy A.K."/>
        </authorList>
    </citation>
    <scope>NUCLEOTIDE SEQUENCE [MRNA]</scope>
    <source>
        <strain>Fischer 344</strain>
        <tissue>Liver</tissue>
    </source>
</reference>
<reference key="4">
    <citation type="journal article" date="2002" name="Mol. Biol. (Mosk.)">
        <title>PCR amplification and structural analysis of two paralogous rat estrogen sulfotransferase genes.</title>
        <authorList>
            <person name="Astapova I.I."/>
            <person name="Smirnov A.N."/>
            <person name="Rubtsov P.M."/>
        </authorList>
    </citation>
    <scope>NUCLEOTIDE SEQUENCE [GENOMIC DNA]</scope>
</reference>
<reference key="5">
    <citation type="journal article" date="2004" name="Nature">
        <title>Genome sequence of the Brown Norway rat yields insights into mammalian evolution.</title>
        <authorList>
            <person name="Gibbs R.A."/>
            <person name="Weinstock G.M."/>
            <person name="Metzker M.L."/>
            <person name="Muzny D.M."/>
            <person name="Sodergren E.J."/>
            <person name="Scherer S."/>
            <person name="Scott G."/>
            <person name="Steffen D."/>
            <person name="Worley K.C."/>
            <person name="Burch P.E."/>
            <person name="Okwuonu G."/>
            <person name="Hines S."/>
            <person name="Lewis L."/>
            <person name="Deramo C."/>
            <person name="Delgado O."/>
            <person name="Dugan-Rocha S."/>
            <person name="Miner G."/>
            <person name="Morgan M."/>
            <person name="Hawes A."/>
            <person name="Gill R."/>
            <person name="Holt R.A."/>
            <person name="Adams M.D."/>
            <person name="Amanatides P.G."/>
            <person name="Baden-Tillson H."/>
            <person name="Barnstead M."/>
            <person name="Chin S."/>
            <person name="Evans C.A."/>
            <person name="Ferriera S."/>
            <person name="Fosler C."/>
            <person name="Glodek A."/>
            <person name="Gu Z."/>
            <person name="Jennings D."/>
            <person name="Kraft C.L."/>
            <person name="Nguyen T."/>
            <person name="Pfannkoch C.M."/>
            <person name="Sitter C."/>
            <person name="Sutton G.G."/>
            <person name="Venter J.C."/>
            <person name="Woodage T."/>
            <person name="Smith D."/>
            <person name="Lee H.-M."/>
            <person name="Gustafson E."/>
            <person name="Cahill P."/>
            <person name="Kana A."/>
            <person name="Doucette-Stamm L."/>
            <person name="Weinstock K."/>
            <person name="Fechtel K."/>
            <person name="Weiss R.B."/>
            <person name="Dunn D.M."/>
            <person name="Green E.D."/>
            <person name="Blakesley R.W."/>
            <person name="Bouffard G.G."/>
            <person name="De Jong P.J."/>
            <person name="Osoegawa K."/>
            <person name="Zhu B."/>
            <person name="Marra M."/>
            <person name="Schein J."/>
            <person name="Bosdet I."/>
            <person name="Fjell C."/>
            <person name="Jones S."/>
            <person name="Krzywinski M."/>
            <person name="Mathewson C."/>
            <person name="Siddiqui A."/>
            <person name="Wye N."/>
            <person name="McPherson J."/>
            <person name="Zhao S."/>
            <person name="Fraser C.M."/>
            <person name="Shetty J."/>
            <person name="Shatsman S."/>
            <person name="Geer K."/>
            <person name="Chen Y."/>
            <person name="Abramzon S."/>
            <person name="Nierman W.C."/>
            <person name="Havlak P.H."/>
            <person name="Chen R."/>
            <person name="Durbin K.J."/>
            <person name="Egan A."/>
            <person name="Ren Y."/>
            <person name="Song X.-Z."/>
            <person name="Li B."/>
            <person name="Liu Y."/>
            <person name="Qin X."/>
            <person name="Cawley S."/>
            <person name="Cooney A.J."/>
            <person name="D'Souza L.M."/>
            <person name="Martin K."/>
            <person name="Wu J.Q."/>
            <person name="Gonzalez-Garay M.L."/>
            <person name="Jackson A.R."/>
            <person name="Kalafus K.J."/>
            <person name="McLeod M.P."/>
            <person name="Milosavljevic A."/>
            <person name="Virk D."/>
            <person name="Volkov A."/>
            <person name="Wheeler D.A."/>
            <person name="Zhang Z."/>
            <person name="Bailey J.A."/>
            <person name="Eichler E.E."/>
            <person name="Tuzun E."/>
            <person name="Birney E."/>
            <person name="Mongin E."/>
            <person name="Ureta-Vidal A."/>
            <person name="Woodwark C."/>
            <person name="Zdobnov E."/>
            <person name="Bork P."/>
            <person name="Suyama M."/>
            <person name="Torrents D."/>
            <person name="Alexandersson M."/>
            <person name="Trask B.J."/>
            <person name="Young J.M."/>
            <person name="Huang H."/>
            <person name="Wang H."/>
            <person name="Xing H."/>
            <person name="Daniels S."/>
            <person name="Gietzen D."/>
            <person name="Schmidt J."/>
            <person name="Stevens K."/>
            <person name="Vitt U."/>
            <person name="Wingrove J."/>
            <person name="Camara F."/>
            <person name="Mar Alba M."/>
            <person name="Abril J.F."/>
            <person name="Guigo R."/>
            <person name="Smit A."/>
            <person name="Dubchak I."/>
            <person name="Rubin E.M."/>
            <person name="Couronne O."/>
            <person name="Poliakov A."/>
            <person name="Huebner N."/>
            <person name="Ganten D."/>
            <person name="Goesele C."/>
            <person name="Hummel O."/>
            <person name="Kreitler T."/>
            <person name="Lee Y.-A."/>
            <person name="Monti J."/>
            <person name="Schulz H."/>
            <person name="Zimdahl H."/>
            <person name="Himmelbauer H."/>
            <person name="Lehrach H."/>
            <person name="Jacob H.J."/>
            <person name="Bromberg S."/>
            <person name="Gullings-Handley J."/>
            <person name="Jensen-Seaman M.I."/>
            <person name="Kwitek A.E."/>
            <person name="Lazar J."/>
            <person name="Pasko D."/>
            <person name="Tonellato P.J."/>
            <person name="Twigger S."/>
            <person name="Ponting C.P."/>
            <person name="Duarte J.M."/>
            <person name="Rice S."/>
            <person name="Goodstadt L."/>
            <person name="Beatson S.A."/>
            <person name="Emes R.D."/>
            <person name="Winter E.E."/>
            <person name="Webber C."/>
            <person name="Brandt P."/>
            <person name="Nyakatura G."/>
            <person name="Adetobi M."/>
            <person name="Chiaromonte F."/>
            <person name="Elnitski L."/>
            <person name="Eswara P."/>
            <person name="Hardison R.C."/>
            <person name="Hou M."/>
            <person name="Kolbe D."/>
            <person name="Makova K."/>
            <person name="Miller W."/>
            <person name="Nekrutenko A."/>
            <person name="Riemer C."/>
            <person name="Schwartz S."/>
            <person name="Taylor J."/>
            <person name="Yang S."/>
            <person name="Zhang Y."/>
            <person name="Lindpaintner K."/>
            <person name="Andrews T.D."/>
            <person name="Caccamo M."/>
            <person name="Clamp M."/>
            <person name="Clarke L."/>
            <person name="Curwen V."/>
            <person name="Durbin R.M."/>
            <person name="Eyras E."/>
            <person name="Searle S.M."/>
            <person name="Cooper G.M."/>
            <person name="Batzoglou S."/>
            <person name="Brudno M."/>
            <person name="Sidow A."/>
            <person name="Stone E.A."/>
            <person name="Payseur B.A."/>
            <person name="Bourque G."/>
            <person name="Lopez-Otin C."/>
            <person name="Puente X.S."/>
            <person name="Chakrabarti K."/>
            <person name="Chatterji S."/>
            <person name="Dewey C."/>
            <person name="Pachter L."/>
            <person name="Bray N."/>
            <person name="Yap V.B."/>
            <person name="Caspi A."/>
            <person name="Tesler G."/>
            <person name="Pevzner P.A."/>
            <person name="Haussler D."/>
            <person name="Roskin K.M."/>
            <person name="Baertsch R."/>
            <person name="Clawson H."/>
            <person name="Furey T.S."/>
            <person name="Hinrichs A.S."/>
            <person name="Karolchik D."/>
            <person name="Kent W.J."/>
            <person name="Rosenbloom K.R."/>
            <person name="Trumbower H."/>
            <person name="Weirauch M."/>
            <person name="Cooper D.N."/>
            <person name="Stenson P.D."/>
            <person name="Ma B."/>
            <person name="Brent M."/>
            <person name="Arumugam M."/>
            <person name="Shteynberg D."/>
            <person name="Copley R.R."/>
            <person name="Taylor M.S."/>
            <person name="Riethman H."/>
            <person name="Mudunuri U."/>
            <person name="Peterson J."/>
            <person name="Guyer M."/>
            <person name="Felsenfeld A."/>
            <person name="Old S."/>
            <person name="Mockrin S."/>
            <person name="Collins F.S."/>
        </authorList>
    </citation>
    <scope>NUCLEOTIDE SEQUENCE [LARGE SCALE GENOMIC DNA]</scope>
    <source>
        <strain>Brown Norway</strain>
    </source>
</reference>
<reference key="6">
    <citation type="journal article" date="2012" name="Nat. Commun.">
        <title>Quantitative maps of protein phosphorylation sites across 14 different rat organs and tissues.</title>
        <authorList>
            <person name="Lundby A."/>
            <person name="Secher A."/>
            <person name="Lage K."/>
            <person name="Nordsborg N.B."/>
            <person name="Dmytriyev A."/>
            <person name="Lundby C."/>
            <person name="Olsen J.V."/>
        </authorList>
    </citation>
    <scope>PHOSPHORYLATION [LARGE SCALE ANALYSIS] AT SER-156</scope>
    <scope>IDENTIFICATION BY MASS SPECTROMETRY [LARGE SCALE ANALYSIS]</scope>
</reference>
<gene>
    <name evidence="8" type="primary">Sult1e1</name>
    <name type="synonym">Ste</name>
    <name type="synonym">Ste1</name>
    <name type="synonym">Ste2</name>
</gene>
<proteinExistence type="evidence at protein level"/>
<accession>P52844</accession>
<accession>P49889</accession>
<accession>P49890</accession>
<accession>P52845</accession>
<accession>Q9QWS0</accession>
<evidence type="ECO:0000250" key="1">
    <source>
        <dbReference type="UniProtKB" id="P49887"/>
    </source>
</evidence>
<evidence type="ECO:0000250" key="2">
    <source>
        <dbReference type="UniProtKB" id="P49888"/>
    </source>
</evidence>
<evidence type="ECO:0000250" key="3">
    <source>
        <dbReference type="UniProtKB" id="P49891"/>
    </source>
</evidence>
<evidence type="ECO:0000269" key="4">
    <source>
    </source>
</evidence>
<evidence type="ECO:0000269" key="5">
    <source>
    </source>
</evidence>
<evidence type="ECO:0000305" key="6"/>
<evidence type="ECO:0000305" key="7">
    <source>
    </source>
</evidence>
<evidence type="ECO:0000312" key="8">
    <source>
        <dbReference type="RGD" id="3776"/>
    </source>
</evidence>
<evidence type="ECO:0007744" key="9">
    <source>
    </source>
</evidence>
<comment type="function">
    <text evidence="2 5">Sulfotransferase that utilizes 3'-phospho-5'-adenylyl sulfate (PAPS) as sulfonate donor to catalyze the sulfate conjugation of estradiol and estrone (PubMed:7857871). Is a key enzyme in estrogen homeostasis, the sulfation of estrogens leads to their inactivation. Also sulfates dehydroepiandrosterone (DHEA), pregnenolone, (24S)-hydroxycholesterol and xenobiotic compounds like ethinylestradiol, equalenin, diethyl stilbesterol and 1-naphthol at significantly lower efficiency. Does not sulfonate cortisol, testosterone and dopamine. May play a role in gut microbiota-host metabolic interaction. O-sulfonates 4-ethylphenol (4-EP), a dietary tyrosine-derived metabolite produced by gut bacteria. The product 4-EPS crosses the blood-brain barrier and may negatively regulate oligodendrocyte maturation and myelination, affecting the functional connectivity of different brain regions associated with the limbic system.</text>
</comment>
<comment type="catalytic activity">
    <reaction evidence="5">
        <text>estrone + 3'-phosphoadenylyl sulfate = estrone 3-sulfate + adenosine 3',5'-bisphosphate + H(+)</text>
        <dbReference type="Rhea" id="RHEA:15973"/>
        <dbReference type="ChEBI" id="CHEBI:15378"/>
        <dbReference type="ChEBI" id="CHEBI:17263"/>
        <dbReference type="ChEBI" id="CHEBI:58339"/>
        <dbReference type="ChEBI" id="CHEBI:58343"/>
        <dbReference type="ChEBI" id="CHEBI:60050"/>
        <dbReference type="EC" id="2.8.2.4"/>
    </reaction>
    <physiologicalReaction direction="left-to-right" evidence="7">
        <dbReference type="Rhea" id="RHEA:15974"/>
    </physiologicalReaction>
</comment>
<comment type="catalytic activity">
    <reaction evidence="2">
        <text>(24S)-hydroxycholesterol + 3'-phosphoadenylyl sulfate = (24S)-hydroxycholesterol 3-sulfate + adenosine 3',5'-bisphosphate + H(+)</text>
        <dbReference type="Rhea" id="RHEA:52348"/>
        <dbReference type="ChEBI" id="CHEBI:15378"/>
        <dbReference type="ChEBI" id="CHEBI:34310"/>
        <dbReference type="ChEBI" id="CHEBI:58339"/>
        <dbReference type="ChEBI" id="CHEBI:58343"/>
        <dbReference type="ChEBI" id="CHEBI:136567"/>
    </reaction>
    <physiologicalReaction direction="left-to-right" evidence="2">
        <dbReference type="Rhea" id="RHEA:52349"/>
    </physiologicalReaction>
</comment>
<comment type="catalytic activity">
    <reaction evidence="2">
        <text>17beta-estradiol + 3'-phosphoadenylyl sulfate = 17beta-estradiol 3-sulfate + adenosine 3',5'-bisphosphate + H(+)</text>
        <dbReference type="Rhea" id="RHEA:52372"/>
        <dbReference type="ChEBI" id="CHEBI:15378"/>
        <dbReference type="ChEBI" id="CHEBI:16469"/>
        <dbReference type="ChEBI" id="CHEBI:58339"/>
        <dbReference type="ChEBI" id="CHEBI:58343"/>
        <dbReference type="ChEBI" id="CHEBI:136582"/>
    </reaction>
    <physiologicalReaction direction="left-to-right" evidence="2">
        <dbReference type="Rhea" id="RHEA:52373"/>
    </physiologicalReaction>
</comment>
<comment type="catalytic activity">
    <reaction evidence="2">
        <text>3beta-hydroxyandrost-5-en-17-one + 3'-phosphoadenylyl sulfate = dehydroepiandrosterone 3-sulfate + adenosine 3',5'-bisphosphate + H(+)</text>
        <dbReference type="Rhea" id="RHEA:51216"/>
        <dbReference type="ChEBI" id="CHEBI:15378"/>
        <dbReference type="ChEBI" id="CHEBI:28689"/>
        <dbReference type="ChEBI" id="CHEBI:57905"/>
        <dbReference type="ChEBI" id="CHEBI:58339"/>
        <dbReference type="ChEBI" id="CHEBI:58343"/>
    </reaction>
</comment>
<comment type="catalytic activity">
    <reaction evidence="2">
        <text>4-ethylphenol + 3'-phosphoadenylyl sulfate = 4-ethylphenyl sulfate + adenosine 3',5'-bisphosphate + H(+)</text>
        <dbReference type="Rhea" id="RHEA:70607"/>
        <dbReference type="ChEBI" id="CHEBI:15378"/>
        <dbReference type="ChEBI" id="CHEBI:49584"/>
        <dbReference type="ChEBI" id="CHEBI:58339"/>
        <dbReference type="ChEBI" id="CHEBI:58343"/>
        <dbReference type="ChEBI" id="CHEBI:133681"/>
    </reaction>
    <physiologicalReaction direction="left-to-right" evidence="2">
        <dbReference type="Rhea" id="RHEA:70608"/>
    </physiologicalReaction>
</comment>
<comment type="activity regulation">
    <text evidence="2">Inhibited by estradiol.</text>
</comment>
<comment type="subunit">
    <text evidence="2">Homodimer.</text>
</comment>
<comment type="subcellular location">
    <subcellularLocation>
        <location evidence="1">Cytoplasm</location>
        <location evidence="1">Cytosol</location>
    </subcellularLocation>
</comment>
<comment type="tissue specificity">
    <text evidence="4">Liver of young mature males and uterus.</text>
</comment>
<comment type="developmental stage">
    <text>Expressed only in the liver of young adult animals (100 days old) and is absent in the prepubertal male (27 days old), senescent male (800 days old) and female liver.</text>
</comment>
<comment type="induction">
    <text>Induced by androgens and suppressed by estrogens. The expression is under the influence of pituitary growth hormone and thyroid hormone. Is regulated by progesterone in the uterus.</text>
</comment>
<comment type="similarity">
    <text evidence="6">Belongs to the sulfotransferase 1 family.</text>
</comment>
<feature type="chain" id="PRO_0000085155" description="Sulfotransferase 1E1">
    <location>
        <begin position="1"/>
        <end position="295"/>
    </location>
</feature>
<feature type="active site" description="Proton acceptor" evidence="3">
    <location>
        <position position="108"/>
    </location>
</feature>
<feature type="binding site" evidence="3">
    <location>
        <begin position="48"/>
        <end position="53"/>
    </location>
    <ligand>
        <name>3'-phosphoadenylyl sulfate</name>
        <dbReference type="ChEBI" id="CHEBI:58339"/>
    </ligand>
</feature>
<feature type="binding site" evidence="3">
    <location>
        <begin position="106"/>
        <end position="108"/>
    </location>
    <ligand>
        <name>substrate</name>
    </ligand>
</feature>
<feature type="binding site" evidence="3">
    <location>
        <position position="130"/>
    </location>
    <ligand>
        <name>3'-phosphoadenylyl sulfate</name>
        <dbReference type="ChEBI" id="CHEBI:58339"/>
    </ligand>
</feature>
<feature type="binding site" evidence="3">
    <location>
        <position position="138"/>
    </location>
    <ligand>
        <name>3'-phosphoadenylyl sulfate</name>
        <dbReference type="ChEBI" id="CHEBI:58339"/>
    </ligand>
</feature>
<feature type="binding site" evidence="3">
    <location>
        <position position="193"/>
    </location>
    <ligand>
        <name>3'-phosphoadenylyl sulfate</name>
        <dbReference type="ChEBI" id="CHEBI:58339"/>
    </ligand>
</feature>
<feature type="binding site" evidence="3">
    <location>
        <begin position="227"/>
        <end position="232"/>
    </location>
    <ligand>
        <name>3'-phosphoadenylyl sulfate</name>
        <dbReference type="ChEBI" id="CHEBI:58339"/>
    </ligand>
</feature>
<feature type="binding site" evidence="3">
    <location>
        <begin position="257"/>
        <end position="259"/>
    </location>
    <ligand>
        <name>3'-phosphoadenylyl sulfate</name>
        <dbReference type="ChEBI" id="CHEBI:58339"/>
    </ligand>
</feature>
<feature type="modified residue" description="Phosphoserine" evidence="9">
    <location>
        <position position="156"/>
    </location>
</feature>
<feature type="sequence conflict" description="In Ref. 1; AAA41128, 2; AAB33441 and 4; CAA10515." evidence="6" ref="1 2 4">
    <original>E</original>
    <variation>D</variation>
    <location>
        <position position="10"/>
    </location>
</feature>
<feature type="sequence conflict" description="In Ref. 1; AAA41128, 2; AAB33441, 3; AAB07680/AAB07681 and 4; CAA10515." evidence="6" ref="1 2 3 4">
    <original>V</original>
    <variation>F</variation>
    <location>
        <position position="18"/>
    </location>
</feature>
<feature type="sequence conflict" description="In Ref. 2; AAB33442." evidence="6" ref="2">
    <original>M</original>
    <variation>V</variation>
    <location>
        <position position="20"/>
    </location>
</feature>
<feature type="sequence conflict" description="In Ref. 1; AAA41128, 2; AAB33441, 3; AAB07680 and 4; CAA10515." evidence="6" ref="1 2 3 4">
    <original>L</original>
    <variation>R</variation>
    <location>
        <position position="23"/>
    </location>
</feature>
<feature type="sequence conflict" description="In Ref. 3; AAB07680." evidence="6" ref="3">
    <original>VETFS</original>
    <variation>IETFL</variation>
    <location>
        <begin position="31"/>
        <end position="35"/>
    </location>
</feature>
<feature type="sequence conflict" description="In Ref. 1; AAA41128, 2; AAB33441 and 4; CAA10515." evidence="6" ref="1 2 4">
    <original>S</original>
    <variation>L</variation>
    <location>
        <position position="35"/>
    </location>
</feature>
<feature type="sequence conflict" description="In Ref. 1; AAA41128, 2; AAB33441, 3; AAB07680 and 4; CAA10515." evidence="6" ref="1 2 3 4">
    <original>V</original>
    <variation>I</variation>
    <location>
        <position position="43"/>
    </location>
</feature>
<feature type="sequence conflict" description="In Ref. 1; AAA41128, 2; AAB33441, 3; AAB07680 and 4; CAA10515." evidence="6" ref="1 2 3 4">
    <original>G</original>
    <variation>S</variation>
    <location>
        <position position="55"/>
    </location>
</feature>
<feature type="sequence conflict" description="In Ref. 1; AAA41128, 2; AAB33441, 3; AAB07680 and 4; CAA10515." evidence="6" ref="1 2 3 4">
    <original>I</original>
    <variation>L</variation>
    <location>
        <position position="75"/>
    </location>
</feature>
<feature type="sequence conflict" description="In Ref. 1; AAA41128, 2; AAB33441, 3; AAB07680 and 4; CAA10515." evidence="6" ref="1 2 3 4">
    <original>Y</original>
    <variation>D</variation>
    <location>
        <position position="81"/>
    </location>
</feature>
<feature type="sequence conflict" description="In Ref. 2; AAB33441." evidence="6" ref="2">
    <original>IKSYP</original>
    <variation>MKSYQ</variation>
    <location>
        <begin position="146"/>
        <end position="150"/>
    </location>
</feature>
<feature type="sequence conflict" description="In Ref. 1; AAA41128, 3; AAB07680/AAB07681 and 4; CAA10515." evidence="6" ref="1 3 4">
    <original>I</original>
    <variation>M</variation>
    <location>
        <position position="146"/>
    </location>
</feature>
<feature type="sequence conflict" description="In Ref. 1; AAA41128, 2; AAB33441, 3; AAB07680/AAB07681 and 4; CAA10515." evidence="6" ref="1 2 3 4">
    <original>L</original>
    <variation>S</variation>
    <location>
        <position position="216"/>
    </location>
</feature>
<feature type="sequence conflict" description="In Ref. 1; AAA41128, 2; AAB33441, 3; AAB07680/AAB07681 and 4; CAA10515." evidence="6" ref="1 2 3 4">
    <original>K</original>
    <variation>R</variation>
    <location>
        <position position="222"/>
    </location>
</feature>
<feature type="sequence conflict" description="In Ref. 2; AAB33441." evidence="6" ref="2">
    <original>T</original>
    <variation>I</variation>
    <location>
        <position position="238"/>
    </location>
</feature>
<feature type="sequence conflict" description="In Ref. 1; AAA41128, 2; AAB33441, 3; AAB07681 and 4; CAA10515." evidence="6" ref="1 2 3 4">
    <original>R</original>
    <variation>K</variation>
    <location>
        <position position="265"/>
    </location>
</feature>
<feature type="sequence conflict" description="In Ref. 1; AAA41128, 2; AAB33441, 3; AAB07681 and 4; CAA10515." evidence="6" ref="1 2 3 4">
    <original>RH</original>
    <variation>QQ</variation>
    <location>
        <begin position="282"/>
        <end position="283"/>
    </location>
</feature>
<feature type="sequence conflict" description="In Ref. 2; AAB33442." evidence="6" ref="2">
    <original>K</original>
    <variation>T</variation>
    <location>
        <position position="290"/>
    </location>
</feature>
<feature type="sequence conflict" description="In Ref. 2; AAB33441." evidence="6" ref="2">
    <original>L</original>
    <variation>P</variation>
    <location>
        <position position="295"/>
    </location>
</feature>
<sequence>METSMPEYYEVFGDFHGVLMDKLFTKYWEDVETFSARPDDLLVVTYPKSGSTWIGEIVDMIYKEGDVEKCKEDAIFNRIPYLECRNEDLINGIKQLKEKESPRIVKTHLPAKLLPASFWEKNCKIIYLCRNAKDVVVSYYYFFLIIKSYPNPKSFSEFVEKFMEGQVPYGSWYDHVKSWWEKSKNSRVLFMFYEDMKEDIRREVVKLIEFLERDPLAELVDKIIQHTSFQEMKNNPCTNYSMLPETMIDLKVSPFMRKGIVGDWRNHFPEALRERFEEHYQRHMKDCPVKFRAEL</sequence>
<organism>
    <name type="scientific">Rattus norvegicus</name>
    <name type="common">Rat</name>
    <dbReference type="NCBI Taxonomy" id="10116"/>
    <lineage>
        <taxon>Eukaryota</taxon>
        <taxon>Metazoa</taxon>
        <taxon>Chordata</taxon>
        <taxon>Craniata</taxon>
        <taxon>Vertebrata</taxon>
        <taxon>Euteleostomi</taxon>
        <taxon>Mammalia</taxon>
        <taxon>Eutheria</taxon>
        <taxon>Euarchontoglires</taxon>
        <taxon>Glires</taxon>
        <taxon>Rodentia</taxon>
        <taxon>Myomorpha</taxon>
        <taxon>Muroidea</taxon>
        <taxon>Muridae</taxon>
        <taxon>Murinae</taxon>
        <taxon>Rattus</taxon>
    </lineage>
</organism>
<dbReference type="EC" id="2.8.2.4" evidence="5"/>
<dbReference type="EMBL" id="M86758">
    <property type="protein sequence ID" value="AAA41128.1"/>
    <property type="molecule type" value="mRNA"/>
</dbReference>
<dbReference type="EMBL" id="AJ131835">
    <property type="protein sequence ID" value="CAA10515.2"/>
    <property type="molecule type" value="Genomic_DNA"/>
</dbReference>
<dbReference type="EMBL" id="AJ298109">
    <property type="protein sequence ID" value="CAA10515.2"/>
    <property type="status" value="JOINED"/>
    <property type="molecule type" value="Genomic_DNA"/>
</dbReference>
<dbReference type="EMBL" id="AJ298110">
    <property type="protein sequence ID" value="CAA10515.2"/>
    <property type="status" value="JOINED"/>
    <property type="molecule type" value="Genomic_DNA"/>
</dbReference>
<dbReference type="EMBL" id="AJ298111">
    <property type="protein sequence ID" value="CAA10515.2"/>
    <property type="status" value="JOINED"/>
    <property type="molecule type" value="Genomic_DNA"/>
</dbReference>
<dbReference type="EMBL" id="AJ298112">
    <property type="protein sequence ID" value="CAA10515.2"/>
    <property type="status" value="JOINED"/>
    <property type="molecule type" value="Genomic_DNA"/>
</dbReference>
<dbReference type="EMBL" id="AJ298113">
    <property type="protein sequence ID" value="CAA10515.2"/>
    <property type="status" value="JOINED"/>
    <property type="molecule type" value="Genomic_DNA"/>
</dbReference>
<dbReference type="EMBL" id="AJ298114">
    <property type="protein sequence ID" value="CAA10515.2"/>
    <property type="status" value="JOINED"/>
    <property type="molecule type" value="Genomic_DNA"/>
</dbReference>
<dbReference type="EMBL" id="S76489">
    <property type="protein sequence ID" value="AAB33441.1"/>
    <property type="molecule type" value="mRNA"/>
</dbReference>
<dbReference type="EMBL" id="S76490">
    <property type="protein sequence ID" value="AAB33442.1"/>
    <property type="molecule type" value="mRNA"/>
</dbReference>
<dbReference type="EMBL" id="U50204">
    <property type="protein sequence ID" value="AAB07680.1"/>
    <property type="molecule type" value="mRNA"/>
</dbReference>
<dbReference type="EMBL" id="U50205">
    <property type="protein sequence ID" value="AAB07681.1"/>
    <property type="molecule type" value="mRNA"/>
</dbReference>
<dbReference type="EMBL" id="JACYVU010000252">
    <property type="status" value="NOT_ANNOTATED_CDS"/>
    <property type="molecule type" value="Genomic_DNA"/>
</dbReference>
<dbReference type="PIR" id="A41930">
    <property type="entry name" value="A41930"/>
</dbReference>
<dbReference type="PIR" id="I56606">
    <property type="entry name" value="I56606"/>
</dbReference>
<dbReference type="RefSeq" id="NP_037015.2">
    <property type="nucleotide sequence ID" value="NM_012883.2"/>
</dbReference>
<dbReference type="RefSeq" id="XP_006250855.1">
    <property type="nucleotide sequence ID" value="XM_006250793.3"/>
</dbReference>
<dbReference type="RefSeq" id="XP_008768261.1">
    <property type="nucleotide sequence ID" value="XM_008770039.2"/>
</dbReference>
<dbReference type="RefSeq" id="XP_063129379.1">
    <property type="nucleotide sequence ID" value="XM_063273309.1"/>
</dbReference>
<dbReference type="SMR" id="P52844"/>
<dbReference type="STRING" id="10116.ENSRNOP00000002680"/>
<dbReference type="ChEMBL" id="CHEMBL4831"/>
<dbReference type="iPTMnet" id="P52844"/>
<dbReference type="PhosphoSitePlus" id="P52844"/>
<dbReference type="PaxDb" id="10116-ENSRNOP00000002680"/>
<dbReference type="Ensembl" id="ENSRNOT00055028691">
    <property type="protein sequence ID" value="ENSRNOP00055023107"/>
    <property type="gene ID" value="ENSRNOG00055016876"/>
</dbReference>
<dbReference type="Ensembl" id="ENSRNOT00060021603">
    <property type="protein sequence ID" value="ENSRNOP00060017071"/>
    <property type="gene ID" value="ENSRNOG00060012715"/>
</dbReference>
<dbReference type="Ensembl" id="ENSRNOT00065007900">
    <property type="protein sequence ID" value="ENSRNOP00065005498"/>
    <property type="gene ID" value="ENSRNOG00065005349"/>
</dbReference>
<dbReference type="GeneID" id="360268"/>
<dbReference type="KEGG" id="rno:360268"/>
<dbReference type="AGR" id="RGD:3776"/>
<dbReference type="CTD" id="6783"/>
<dbReference type="RGD" id="3776">
    <property type="gene designation" value="Sult1e1"/>
</dbReference>
<dbReference type="eggNOG" id="KOG1584">
    <property type="taxonomic scope" value="Eukaryota"/>
</dbReference>
<dbReference type="InParanoid" id="P49889"/>
<dbReference type="OrthoDB" id="205623at2759"/>
<dbReference type="BRENDA" id="2.8.2.4">
    <property type="organism ID" value="5301"/>
</dbReference>
<dbReference type="Reactome" id="R-RNO-156584">
    <property type="pathway name" value="Cytosolic sulfonation of small molecules"/>
</dbReference>
<dbReference type="Reactome" id="R-RNO-9753281">
    <property type="pathway name" value="Paracetamol ADME"/>
</dbReference>
<dbReference type="PRO" id="PR:P52844"/>
<dbReference type="Proteomes" id="UP000002494">
    <property type="component" value="Unplaced"/>
</dbReference>
<dbReference type="GO" id="GO:0005737">
    <property type="term" value="C:cytoplasm"/>
    <property type="evidence" value="ECO:0000266"/>
    <property type="project" value="RGD"/>
</dbReference>
<dbReference type="GO" id="GO:0005829">
    <property type="term" value="C:cytosol"/>
    <property type="evidence" value="ECO:0000250"/>
    <property type="project" value="UniProtKB"/>
</dbReference>
<dbReference type="GO" id="GO:0031965">
    <property type="term" value="C:nuclear membrane"/>
    <property type="evidence" value="ECO:0007669"/>
    <property type="project" value="Ensembl"/>
</dbReference>
<dbReference type="GO" id="GO:0004304">
    <property type="term" value="F:estrone sulfotransferase activity"/>
    <property type="evidence" value="ECO:0000314"/>
    <property type="project" value="RGD"/>
</dbReference>
<dbReference type="GO" id="GO:0047894">
    <property type="term" value="F:flavonol 3-sulfotransferase activity"/>
    <property type="evidence" value="ECO:0000266"/>
    <property type="project" value="RGD"/>
</dbReference>
<dbReference type="GO" id="GO:0005496">
    <property type="term" value="F:steroid binding"/>
    <property type="evidence" value="ECO:0007669"/>
    <property type="project" value="UniProtKB-KW"/>
</dbReference>
<dbReference type="GO" id="GO:0050294">
    <property type="term" value="F:steroid sulfotransferase activity"/>
    <property type="evidence" value="ECO:0000250"/>
    <property type="project" value="UniProtKB"/>
</dbReference>
<dbReference type="GO" id="GO:0008146">
    <property type="term" value="F:sulfotransferase activity"/>
    <property type="evidence" value="ECO:0000266"/>
    <property type="project" value="RGD"/>
</dbReference>
<dbReference type="GO" id="GO:0050427">
    <property type="term" value="P:3'-phosphoadenosine 5'-phosphosulfate metabolic process"/>
    <property type="evidence" value="ECO:0000266"/>
    <property type="project" value="RGD"/>
</dbReference>
<dbReference type="GO" id="GO:0006711">
    <property type="term" value="P:estrogen catabolic process"/>
    <property type="evidence" value="ECO:0000266"/>
    <property type="project" value="RGD"/>
</dbReference>
<dbReference type="GO" id="GO:0008210">
    <property type="term" value="P:estrogen metabolic process"/>
    <property type="evidence" value="ECO:0000250"/>
    <property type="project" value="UniProtKB"/>
</dbReference>
<dbReference type="GO" id="GO:0006068">
    <property type="term" value="P:ethanol catabolic process"/>
    <property type="evidence" value="ECO:0000266"/>
    <property type="project" value="RGD"/>
</dbReference>
<dbReference type="GO" id="GO:0007565">
    <property type="term" value="P:female pregnancy"/>
    <property type="evidence" value="ECO:0000266"/>
    <property type="project" value="RGD"/>
</dbReference>
<dbReference type="GO" id="GO:0045600">
    <property type="term" value="P:positive regulation of fat cell differentiation"/>
    <property type="evidence" value="ECO:0000266"/>
    <property type="project" value="RGD"/>
</dbReference>
<dbReference type="GO" id="GO:0051923">
    <property type="term" value="P:sulfation"/>
    <property type="evidence" value="ECO:0000266"/>
    <property type="project" value="RGD"/>
</dbReference>
<dbReference type="FunFam" id="3.40.50.300:FF:000433">
    <property type="entry name" value="Estrogen sulfotransferase"/>
    <property type="match status" value="1"/>
</dbReference>
<dbReference type="Gene3D" id="3.40.50.300">
    <property type="entry name" value="P-loop containing nucleotide triphosphate hydrolases"/>
    <property type="match status" value="1"/>
</dbReference>
<dbReference type="InterPro" id="IPR027417">
    <property type="entry name" value="P-loop_NTPase"/>
</dbReference>
<dbReference type="InterPro" id="IPR000863">
    <property type="entry name" value="Sulfotransferase_dom"/>
</dbReference>
<dbReference type="PANTHER" id="PTHR11783">
    <property type="entry name" value="SULFOTRANSFERASE SULT"/>
    <property type="match status" value="1"/>
</dbReference>
<dbReference type="Pfam" id="PF00685">
    <property type="entry name" value="Sulfotransfer_1"/>
    <property type="match status" value="1"/>
</dbReference>
<dbReference type="SUPFAM" id="SSF52540">
    <property type="entry name" value="P-loop containing nucleoside triphosphate hydrolases"/>
    <property type="match status" value="1"/>
</dbReference>
<protein>
    <recommendedName>
        <fullName evidence="7">Sulfotransferase 1E1</fullName>
        <shortName>ST1E1</shortName>
        <ecNumber evidence="5">2.8.2.4</ecNumber>
    </recommendedName>
    <alternativeName>
        <fullName>Estrogen sulfotransferase, isoform 1</fullName>
        <shortName>EST-1</shortName>
    </alternativeName>
    <alternativeName>
        <fullName>Estrogen sulfotransferase, isoform 6</fullName>
        <shortName>EST-6</shortName>
    </alternativeName>
    <alternativeName>
        <fullName>Estrone sulfotransferase</fullName>
    </alternativeName>
    <alternativeName>
        <fullName>Sulfotransferase, estrogen-preferring</fullName>
    </alternativeName>
</protein>
<keyword id="KW-0963">Cytoplasm</keyword>
<keyword id="KW-0903">Direct protein sequencing</keyword>
<keyword id="KW-0443">Lipid metabolism</keyword>
<keyword id="KW-0446">Lipid-binding</keyword>
<keyword id="KW-0597">Phosphoprotein</keyword>
<keyword id="KW-1185">Reference proteome</keyword>
<keyword id="KW-0754">Steroid-binding</keyword>
<keyword id="KW-0808">Transferase</keyword>